<sequence length="284" mass="30323">MAQLLDGKEISKVLKEEIKEEVKRWKEQGVNPKLAVVLVGDDPASVVYAKSKQKVSDSLGIDFELTVLPADSSEESILALIDSLNANPDVHGIMIELPLPKHISKERVMAAVRPDKDVDGVHPINRGYILSGEEGLFPATPESCIEIMLRSGVEIAGKHVVIVGRGETVGKPLVFLILKHNATVTICHSRTPDLGAFTRQADIIVAAVGKAKLVKKDMVKPGAIVVDAGINEIPGGICGDVDFEEVKEVASLISPVPGGVGSLTTALIMKNVLKGITLQRKEGQ</sequence>
<evidence type="ECO:0000255" key="1">
    <source>
        <dbReference type="HAMAP-Rule" id="MF_01576"/>
    </source>
</evidence>
<name>FOLD2_DESHY</name>
<proteinExistence type="inferred from homology"/>
<feature type="chain" id="PRO_0000268336" description="Bifunctional protein FolD 2">
    <location>
        <begin position="1"/>
        <end position="284"/>
    </location>
</feature>
<feature type="binding site" evidence="1">
    <location>
        <begin position="164"/>
        <end position="166"/>
    </location>
    <ligand>
        <name>NADP(+)</name>
        <dbReference type="ChEBI" id="CHEBI:58349"/>
    </ligand>
</feature>
<feature type="binding site" evidence="1">
    <location>
        <position position="189"/>
    </location>
    <ligand>
        <name>NADP(+)</name>
        <dbReference type="ChEBI" id="CHEBI:58349"/>
    </ligand>
</feature>
<feature type="binding site" evidence="1">
    <location>
        <position position="230"/>
    </location>
    <ligand>
        <name>NADP(+)</name>
        <dbReference type="ChEBI" id="CHEBI:58349"/>
    </ligand>
</feature>
<keyword id="KW-0028">Amino-acid biosynthesis</keyword>
<keyword id="KW-0368">Histidine biosynthesis</keyword>
<keyword id="KW-0378">Hydrolase</keyword>
<keyword id="KW-0486">Methionine biosynthesis</keyword>
<keyword id="KW-0511">Multifunctional enzyme</keyword>
<keyword id="KW-0521">NADP</keyword>
<keyword id="KW-0554">One-carbon metabolism</keyword>
<keyword id="KW-0560">Oxidoreductase</keyword>
<keyword id="KW-0658">Purine biosynthesis</keyword>
<keyword id="KW-1185">Reference proteome</keyword>
<reference key="1">
    <citation type="journal article" date="2006" name="J. Bacteriol.">
        <title>Complete genome sequence of the dehalorespiring bacterium Desulfitobacterium hafniense Y51 and comparison with Dehalococcoides ethenogenes 195.</title>
        <authorList>
            <person name="Nonaka H."/>
            <person name="Keresztes G."/>
            <person name="Shinoda Y."/>
            <person name="Ikenaga Y."/>
            <person name="Abe M."/>
            <person name="Naito K."/>
            <person name="Inatomi K."/>
            <person name="Furukawa K."/>
            <person name="Inui M."/>
            <person name="Yukawa H."/>
        </authorList>
    </citation>
    <scope>NUCLEOTIDE SEQUENCE [LARGE SCALE GENOMIC DNA]</scope>
    <source>
        <strain>Y51</strain>
    </source>
</reference>
<accession>Q24UZ7</accession>
<gene>
    <name evidence="1" type="primary">folD2</name>
    <name type="ordered locus">DSY2356</name>
</gene>
<protein>
    <recommendedName>
        <fullName evidence="1">Bifunctional protein FolD 2</fullName>
    </recommendedName>
    <domain>
        <recommendedName>
            <fullName evidence="1">Methylenetetrahydrofolate dehydrogenase</fullName>
            <ecNumber evidence="1">1.5.1.5</ecNumber>
        </recommendedName>
    </domain>
    <domain>
        <recommendedName>
            <fullName evidence="1">Methenyltetrahydrofolate cyclohydrolase</fullName>
            <ecNumber evidence="1">3.5.4.9</ecNumber>
        </recommendedName>
    </domain>
</protein>
<dbReference type="EC" id="1.5.1.5" evidence="1"/>
<dbReference type="EC" id="3.5.4.9" evidence="1"/>
<dbReference type="EMBL" id="AP008230">
    <property type="protein sequence ID" value="BAE84145.1"/>
    <property type="molecule type" value="Genomic_DNA"/>
</dbReference>
<dbReference type="RefSeq" id="WP_011460266.1">
    <property type="nucleotide sequence ID" value="NC_007907.1"/>
</dbReference>
<dbReference type="SMR" id="Q24UZ7"/>
<dbReference type="STRING" id="138119.DSY2356"/>
<dbReference type="KEGG" id="dsy:DSY2356"/>
<dbReference type="eggNOG" id="COG0190">
    <property type="taxonomic scope" value="Bacteria"/>
</dbReference>
<dbReference type="HOGENOM" id="CLU_034045_2_1_9"/>
<dbReference type="UniPathway" id="UPA00193"/>
<dbReference type="Proteomes" id="UP000001946">
    <property type="component" value="Chromosome"/>
</dbReference>
<dbReference type="GO" id="GO:0005829">
    <property type="term" value="C:cytosol"/>
    <property type="evidence" value="ECO:0007669"/>
    <property type="project" value="TreeGrafter"/>
</dbReference>
<dbReference type="GO" id="GO:0004477">
    <property type="term" value="F:methenyltetrahydrofolate cyclohydrolase activity"/>
    <property type="evidence" value="ECO:0007669"/>
    <property type="project" value="UniProtKB-UniRule"/>
</dbReference>
<dbReference type="GO" id="GO:0004488">
    <property type="term" value="F:methylenetetrahydrofolate dehydrogenase (NADP+) activity"/>
    <property type="evidence" value="ECO:0007669"/>
    <property type="project" value="UniProtKB-UniRule"/>
</dbReference>
<dbReference type="GO" id="GO:0000105">
    <property type="term" value="P:L-histidine biosynthetic process"/>
    <property type="evidence" value="ECO:0007669"/>
    <property type="project" value="UniProtKB-KW"/>
</dbReference>
<dbReference type="GO" id="GO:0009086">
    <property type="term" value="P:methionine biosynthetic process"/>
    <property type="evidence" value="ECO:0007669"/>
    <property type="project" value="UniProtKB-KW"/>
</dbReference>
<dbReference type="GO" id="GO:0006164">
    <property type="term" value="P:purine nucleotide biosynthetic process"/>
    <property type="evidence" value="ECO:0007669"/>
    <property type="project" value="UniProtKB-KW"/>
</dbReference>
<dbReference type="GO" id="GO:0035999">
    <property type="term" value="P:tetrahydrofolate interconversion"/>
    <property type="evidence" value="ECO:0007669"/>
    <property type="project" value="UniProtKB-UniRule"/>
</dbReference>
<dbReference type="CDD" id="cd01080">
    <property type="entry name" value="NAD_bind_m-THF_DH_Cyclohyd"/>
    <property type="match status" value="1"/>
</dbReference>
<dbReference type="FunFam" id="3.40.50.720:FF:000094">
    <property type="entry name" value="Bifunctional protein FolD"/>
    <property type="match status" value="1"/>
</dbReference>
<dbReference type="FunFam" id="3.40.50.10860:FF:000005">
    <property type="entry name" value="C-1-tetrahydrofolate synthase, cytoplasmic, putative"/>
    <property type="match status" value="1"/>
</dbReference>
<dbReference type="Gene3D" id="3.40.50.10860">
    <property type="entry name" value="Leucine Dehydrogenase, chain A, domain 1"/>
    <property type="match status" value="1"/>
</dbReference>
<dbReference type="Gene3D" id="3.40.50.720">
    <property type="entry name" value="NAD(P)-binding Rossmann-like Domain"/>
    <property type="match status" value="1"/>
</dbReference>
<dbReference type="HAMAP" id="MF_01576">
    <property type="entry name" value="THF_DHG_CYH"/>
    <property type="match status" value="1"/>
</dbReference>
<dbReference type="InterPro" id="IPR046346">
    <property type="entry name" value="Aminoacid_DH-like_N_sf"/>
</dbReference>
<dbReference type="InterPro" id="IPR036291">
    <property type="entry name" value="NAD(P)-bd_dom_sf"/>
</dbReference>
<dbReference type="InterPro" id="IPR000672">
    <property type="entry name" value="THF_DH/CycHdrlase"/>
</dbReference>
<dbReference type="InterPro" id="IPR020630">
    <property type="entry name" value="THF_DH/CycHdrlase_cat_dom"/>
</dbReference>
<dbReference type="InterPro" id="IPR020631">
    <property type="entry name" value="THF_DH/CycHdrlase_NAD-bd_dom"/>
</dbReference>
<dbReference type="PANTHER" id="PTHR48099:SF5">
    <property type="entry name" value="C-1-TETRAHYDROFOLATE SYNTHASE, CYTOPLASMIC"/>
    <property type="match status" value="1"/>
</dbReference>
<dbReference type="PANTHER" id="PTHR48099">
    <property type="entry name" value="C-1-TETRAHYDROFOLATE SYNTHASE, CYTOPLASMIC-RELATED"/>
    <property type="match status" value="1"/>
</dbReference>
<dbReference type="Pfam" id="PF00763">
    <property type="entry name" value="THF_DHG_CYH"/>
    <property type="match status" value="1"/>
</dbReference>
<dbReference type="Pfam" id="PF02882">
    <property type="entry name" value="THF_DHG_CYH_C"/>
    <property type="match status" value="1"/>
</dbReference>
<dbReference type="PRINTS" id="PR00085">
    <property type="entry name" value="THFDHDRGNASE"/>
</dbReference>
<dbReference type="SUPFAM" id="SSF53223">
    <property type="entry name" value="Aminoacid dehydrogenase-like, N-terminal domain"/>
    <property type="match status" value="1"/>
</dbReference>
<dbReference type="SUPFAM" id="SSF51735">
    <property type="entry name" value="NAD(P)-binding Rossmann-fold domains"/>
    <property type="match status" value="1"/>
</dbReference>
<organism>
    <name type="scientific">Desulfitobacterium hafniense (strain Y51)</name>
    <dbReference type="NCBI Taxonomy" id="138119"/>
    <lineage>
        <taxon>Bacteria</taxon>
        <taxon>Bacillati</taxon>
        <taxon>Bacillota</taxon>
        <taxon>Clostridia</taxon>
        <taxon>Eubacteriales</taxon>
        <taxon>Desulfitobacteriaceae</taxon>
        <taxon>Desulfitobacterium</taxon>
    </lineage>
</organism>
<comment type="function">
    <text evidence="1">Catalyzes the oxidation of 5,10-methylenetetrahydrofolate to 5,10-methenyltetrahydrofolate and then the hydrolysis of 5,10-methenyltetrahydrofolate to 10-formyltetrahydrofolate.</text>
</comment>
<comment type="catalytic activity">
    <reaction evidence="1">
        <text>(6R)-5,10-methylene-5,6,7,8-tetrahydrofolate + NADP(+) = (6R)-5,10-methenyltetrahydrofolate + NADPH</text>
        <dbReference type="Rhea" id="RHEA:22812"/>
        <dbReference type="ChEBI" id="CHEBI:15636"/>
        <dbReference type="ChEBI" id="CHEBI:57455"/>
        <dbReference type="ChEBI" id="CHEBI:57783"/>
        <dbReference type="ChEBI" id="CHEBI:58349"/>
        <dbReference type="EC" id="1.5.1.5"/>
    </reaction>
</comment>
<comment type="catalytic activity">
    <reaction evidence="1">
        <text>(6R)-5,10-methenyltetrahydrofolate + H2O = (6R)-10-formyltetrahydrofolate + H(+)</text>
        <dbReference type="Rhea" id="RHEA:23700"/>
        <dbReference type="ChEBI" id="CHEBI:15377"/>
        <dbReference type="ChEBI" id="CHEBI:15378"/>
        <dbReference type="ChEBI" id="CHEBI:57455"/>
        <dbReference type="ChEBI" id="CHEBI:195366"/>
        <dbReference type="EC" id="3.5.4.9"/>
    </reaction>
</comment>
<comment type="pathway">
    <text evidence="1">One-carbon metabolism; tetrahydrofolate interconversion.</text>
</comment>
<comment type="subunit">
    <text evidence="1">Homodimer.</text>
</comment>
<comment type="similarity">
    <text evidence="1">Belongs to the tetrahydrofolate dehydrogenase/cyclohydrolase family.</text>
</comment>